<sequence length="205" mass="23510">MGNIMDGKSVEELSSTECHQWYKKFMTECPSGQLTLYEFRQFFGLKNLSPWASQYVEQMFETFDFNKDGYIDFMEYVAALSLVLKGKVEQKLRWYFKLYDVDGNGCIDRDELLTIIRAIRAINPCSDSTMTAEEFTDTVFSKIDVNGDGELSLEEFMEGVQKDQMLLDTLTRSLDLTRIVRRLQNGEQDEEGASGRETEAAEADG</sequence>
<proteinExistence type="evidence at protein level"/>
<gene>
    <name type="primary">GUCA1A</name>
    <name type="synonym">GCAP1</name>
    <name type="synonym">GUCA1</name>
</gene>
<keyword id="KW-0002">3D-structure</keyword>
<keyword id="KW-0106">Calcium</keyword>
<keyword id="KW-0966">Cell projection</keyword>
<keyword id="KW-0903">Direct protein sequencing</keyword>
<keyword id="KW-0449">Lipoprotein</keyword>
<keyword id="KW-0472">Membrane</keyword>
<keyword id="KW-0479">Metal-binding</keyword>
<keyword id="KW-0519">Myristate</keyword>
<keyword id="KW-1185">Reference proteome</keyword>
<keyword id="KW-0677">Repeat</keyword>
<keyword id="KW-0716">Sensory transduction</keyword>
<keyword id="KW-0844">Vision</keyword>
<dbReference type="EMBL" id="S74247">
    <property type="protein sequence ID" value="AAB31698.2"/>
    <property type="molecule type" value="Genomic_DNA"/>
</dbReference>
<dbReference type="EMBL" id="X95352">
    <property type="protein sequence ID" value="CAA64642.1"/>
    <property type="molecule type" value="mRNA"/>
</dbReference>
<dbReference type="RefSeq" id="NP_776971.1">
    <property type="nucleotide sequence ID" value="NM_174546.2"/>
</dbReference>
<dbReference type="PDB" id="2NA0">
    <property type="method" value="NMR"/>
    <property type="chains" value="A=2-205"/>
</dbReference>
<dbReference type="PDBsum" id="2NA0"/>
<dbReference type="BMRB" id="P46065"/>
<dbReference type="SMR" id="P46065"/>
<dbReference type="BioGRID" id="159514">
    <property type="interactions" value="1"/>
</dbReference>
<dbReference type="FunCoup" id="P46065">
    <property type="interactions" value="37"/>
</dbReference>
<dbReference type="IntAct" id="P46065">
    <property type="interactions" value="2"/>
</dbReference>
<dbReference type="MINT" id="P46065"/>
<dbReference type="STRING" id="9913.ENSBTAP00000057125"/>
<dbReference type="iPTMnet" id="P46065"/>
<dbReference type="PaxDb" id="9913-ENSBTAP00000017036"/>
<dbReference type="Ensembl" id="ENSBTAT00000092615.1">
    <property type="protein sequence ID" value="ENSBTAP00000095626.1"/>
    <property type="gene ID" value="ENSBTAG00000051956.2"/>
</dbReference>
<dbReference type="GeneID" id="282243"/>
<dbReference type="KEGG" id="bta:282243"/>
<dbReference type="CTD" id="2978"/>
<dbReference type="VEuPathDB" id="HostDB:ENSBTAG00000051956"/>
<dbReference type="VGNC" id="VGNC:29714">
    <property type="gene designation" value="GUCA1A"/>
</dbReference>
<dbReference type="eggNOG" id="KOG0044">
    <property type="taxonomic scope" value="Eukaryota"/>
</dbReference>
<dbReference type="GeneTree" id="ENSGT00940000160607"/>
<dbReference type="HOGENOM" id="CLU_072366_4_1_1"/>
<dbReference type="InParanoid" id="P46065"/>
<dbReference type="OMA" id="IRTINPC"/>
<dbReference type="OrthoDB" id="191686at2759"/>
<dbReference type="TreeFam" id="TF333971"/>
<dbReference type="Reactome" id="R-BTA-2514859">
    <property type="pathway name" value="Inactivation, recovery and regulation of the phototransduction cascade"/>
</dbReference>
<dbReference type="EvolutionaryTrace" id="P46065"/>
<dbReference type="Proteomes" id="UP000009136">
    <property type="component" value="Chromosome 23"/>
</dbReference>
<dbReference type="Bgee" id="ENSBTAG00000051956">
    <property type="expression patterns" value="Expressed in retina and 43 other cell types or tissues"/>
</dbReference>
<dbReference type="GO" id="GO:0120199">
    <property type="term" value="C:cone photoreceptor outer segment"/>
    <property type="evidence" value="ECO:0000314"/>
    <property type="project" value="UniProtKB"/>
</dbReference>
<dbReference type="GO" id="GO:0016020">
    <property type="term" value="C:membrane"/>
    <property type="evidence" value="ECO:0007669"/>
    <property type="project" value="UniProtKB-SubCell"/>
</dbReference>
<dbReference type="GO" id="GO:0001917">
    <property type="term" value="C:photoreceptor inner segment"/>
    <property type="evidence" value="ECO:0000314"/>
    <property type="project" value="UniProtKB"/>
</dbReference>
<dbReference type="GO" id="GO:0005509">
    <property type="term" value="F:calcium ion binding"/>
    <property type="evidence" value="ECO:0000314"/>
    <property type="project" value="UniProtKB"/>
</dbReference>
<dbReference type="GO" id="GO:0008048">
    <property type="term" value="F:calcium sensitive guanylate cyclase activator activity"/>
    <property type="evidence" value="ECO:0000314"/>
    <property type="project" value="UniProtKB"/>
</dbReference>
<dbReference type="GO" id="GO:0030249">
    <property type="term" value="F:guanylate cyclase regulator activity"/>
    <property type="evidence" value="ECO:0000314"/>
    <property type="project" value="UniProtKB"/>
</dbReference>
<dbReference type="GO" id="GO:0071277">
    <property type="term" value="P:cellular response to calcium ion"/>
    <property type="evidence" value="ECO:0000314"/>
    <property type="project" value="UniProtKB"/>
</dbReference>
<dbReference type="GO" id="GO:0007602">
    <property type="term" value="P:phototransduction"/>
    <property type="evidence" value="ECO:0000250"/>
    <property type="project" value="AgBase"/>
</dbReference>
<dbReference type="GO" id="GO:0031284">
    <property type="term" value="P:positive regulation of guanylate cyclase activity"/>
    <property type="evidence" value="ECO:0000314"/>
    <property type="project" value="UniProtKB"/>
</dbReference>
<dbReference type="GO" id="GO:0031282">
    <property type="term" value="P:regulation of guanylate cyclase activity"/>
    <property type="evidence" value="ECO:0000250"/>
    <property type="project" value="AgBase"/>
</dbReference>
<dbReference type="GO" id="GO:0009966">
    <property type="term" value="P:regulation of signal transduction"/>
    <property type="evidence" value="ECO:0000318"/>
    <property type="project" value="GO_Central"/>
</dbReference>
<dbReference type="GO" id="GO:0007601">
    <property type="term" value="P:visual perception"/>
    <property type="evidence" value="ECO:0000250"/>
    <property type="project" value="AgBase"/>
</dbReference>
<dbReference type="CDD" id="cd00051">
    <property type="entry name" value="EFh"/>
    <property type="match status" value="2"/>
</dbReference>
<dbReference type="DisProt" id="DP00840"/>
<dbReference type="FunFam" id="1.10.238.10:FF:000052">
    <property type="entry name" value="Guanylate cyclase activator 1A"/>
    <property type="match status" value="1"/>
</dbReference>
<dbReference type="Gene3D" id="1.10.238.10">
    <property type="entry name" value="EF-hand"/>
    <property type="match status" value="2"/>
</dbReference>
<dbReference type="InterPro" id="IPR011992">
    <property type="entry name" value="EF-hand-dom_pair"/>
</dbReference>
<dbReference type="InterPro" id="IPR018247">
    <property type="entry name" value="EF_Hand_1_Ca_BS"/>
</dbReference>
<dbReference type="InterPro" id="IPR002048">
    <property type="entry name" value="EF_hand_dom"/>
</dbReference>
<dbReference type="InterPro" id="IPR028846">
    <property type="entry name" value="Recoverin"/>
</dbReference>
<dbReference type="PANTHER" id="PTHR23055">
    <property type="entry name" value="CALCIUM BINDING PROTEINS"/>
    <property type="match status" value="1"/>
</dbReference>
<dbReference type="PANTHER" id="PTHR23055:SF13">
    <property type="entry name" value="GUANYLYL CYCLASE-ACTIVATING PROTEIN 1"/>
    <property type="match status" value="1"/>
</dbReference>
<dbReference type="Pfam" id="PF00036">
    <property type="entry name" value="EF-hand_1"/>
    <property type="match status" value="1"/>
</dbReference>
<dbReference type="Pfam" id="PF13499">
    <property type="entry name" value="EF-hand_7"/>
    <property type="match status" value="1"/>
</dbReference>
<dbReference type="PRINTS" id="PR00450">
    <property type="entry name" value="RECOVERIN"/>
</dbReference>
<dbReference type="SMART" id="SM00054">
    <property type="entry name" value="EFh"/>
    <property type="match status" value="3"/>
</dbReference>
<dbReference type="SUPFAM" id="SSF47473">
    <property type="entry name" value="EF-hand"/>
    <property type="match status" value="1"/>
</dbReference>
<dbReference type="PROSITE" id="PS00018">
    <property type="entry name" value="EF_HAND_1"/>
    <property type="match status" value="3"/>
</dbReference>
<dbReference type="PROSITE" id="PS50222">
    <property type="entry name" value="EF_HAND_2"/>
    <property type="match status" value="4"/>
</dbReference>
<protein>
    <recommendedName>
        <fullName>Guanylyl cyclase-activating protein 1</fullName>
        <shortName>GCAP 1</shortName>
    </recommendedName>
    <alternativeName>
        <fullName>Guanylate cyclase activator 1A</fullName>
    </alternativeName>
</protein>
<accession>P46065</accession>
<evidence type="ECO:0000250" key="1">
    <source>
        <dbReference type="UniProtKB" id="P43080"/>
    </source>
</evidence>
<evidence type="ECO:0000250" key="2">
    <source>
        <dbReference type="UniProtKB" id="P43081"/>
    </source>
</evidence>
<evidence type="ECO:0000255" key="3"/>
<evidence type="ECO:0000255" key="4">
    <source>
        <dbReference type="PROSITE-ProRule" id="PRU00448"/>
    </source>
</evidence>
<evidence type="ECO:0000256" key="5">
    <source>
        <dbReference type="SAM" id="MobiDB-lite"/>
    </source>
</evidence>
<evidence type="ECO:0000269" key="6">
    <source>
    </source>
</evidence>
<evidence type="ECO:0000269" key="7">
    <source>
    </source>
</evidence>
<evidence type="ECO:0000269" key="8">
    <source>
    </source>
</evidence>
<evidence type="ECO:0000269" key="9">
    <source>
    </source>
</evidence>
<evidence type="ECO:0000269" key="10">
    <source>
    </source>
</evidence>
<evidence type="ECO:0000269" key="11">
    <source>
    </source>
</evidence>
<evidence type="ECO:0000305" key="12"/>
<evidence type="ECO:0007829" key="13">
    <source>
        <dbReference type="PDB" id="2NA0"/>
    </source>
</evidence>
<feature type="initiator methionine" description="Removed" evidence="3">
    <location>
        <position position="1"/>
    </location>
</feature>
<feature type="chain" id="PRO_0000073802" description="Guanylyl cyclase-activating protein 1">
    <location>
        <begin position="2"/>
        <end position="205"/>
    </location>
</feature>
<feature type="domain" description="EF-hand 1" evidence="4 7">
    <location>
        <begin position="14"/>
        <end position="49"/>
    </location>
</feature>
<feature type="domain" description="EF-hand 2" evidence="4 7">
    <location>
        <begin position="51"/>
        <end position="86"/>
    </location>
</feature>
<feature type="domain" description="EF-hand 3" evidence="4 7">
    <location>
        <begin position="87"/>
        <end position="122"/>
    </location>
</feature>
<feature type="domain" description="EF-hand 4" evidence="4 7">
    <location>
        <begin position="131"/>
        <end position="166"/>
    </location>
</feature>
<feature type="region of interest" description="Disordered" evidence="5">
    <location>
        <begin position="185"/>
        <end position="205"/>
    </location>
</feature>
<feature type="binding site" evidence="4 7">
    <location>
        <position position="64"/>
    </location>
    <ligand>
        <name>Ca(2+)</name>
        <dbReference type="ChEBI" id="CHEBI:29108"/>
        <label>1</label>
    </ligand>
</feature>
<feature type="binding site" evidence="4 7">
    <location>
        <position position="66"/>
    </location>
    <ligand>
        <name>Ca(2+)</name>
        <dbReference type="ChEBI" id="CHEBI:29108"/>
        <label>1</label>
    </ligand>
</feature>
<feature type="binding site" evidence="4 7">
    <location>
        <position position="68"/>
    </location>
    <ligand>
        <name>Ca(2+)</name>
        <dbReference type="ChEBI" id="CHEBI:29108"/>
        <label>1</label>
    </ligand>
</feature>
<feature type="binding site" evidence="4 7">
    <location>
        <position position="70"/>
    </location>
    <ligand>
        <name>Ca(2+)</name>
        <dbReference type="ChEBI" id="CHEBI:29108"/>
        <label>1</label>
    </ligand>
</feature>
<feature type="binding site" evidence="4 7">
    <location>
        <position position="75"/>
    </location>
    <ligand>
        <name>Ca(2+)</name>
        <dbReference type="ChEBI" id="CHEBI:29108"/>
        <label>1</label>
    </ligand>
</feature>
<feature type="binding site" evidence="4 7">
    <location>
        <position position="100"/>
    </location>
    <ligand>
        <name>Ca(2+)</name>
        <dbReference type="ChEBI" id="CHEBI:29108"/>
        <label>2</label>
    </ligand>
</feature>
<feature type="binding site" evidence="4 7">
    <location>
        <position position="102"/>
    </location>
    <ligand>
        <name>Ca(2+)</name>
        <dbReference type="ChEBI" id="CHEBI:29108"/>
        <label>2</label>
    </ligand>
</feature>
<feature type="binding site" evidence="4 7">
    <location>
        <position position="104"/>
    </location>
    <ligand>
        <name>Ca(2+)</name>
        <dbReference type="ChEBI" id="CHEBI:29108"/>
        <label>2</label>
    </ligand>
</feature>
<feature type="binding site" evidence="4 7">
    <location>
        <position position="106"/>
    </location>
    <ligand>
        <name>Ca(2+)</name>
        <dbReference type="ChEBI" id="CHEBI:29108"/>
        <label>2</label>
    </ligand>
</feature>
<feature type="binding site" evidence="4 7">
    <location>
        <position position="111"/>
    </location>
    <ligand>
        <name>Ca(2+)</name>
        <dbReference type="ChEBI" id="CHEBI:29108"/>
        <label>2</label>
    </ligand>
</feature>
<feature type="binding site" evidence="4 7">
    <location>
        <position position="144"/>
    </location>
    <ligand>
        <name>Ca(2+)</name>
        <dbReference type="ChEBI" id="CHEBI:29108"/>
        <label>3</label>
    </ligand>
</feature>
<feature type="binding site" evidence="4 7">
    <location>
        <position position="146"/>
    </location>
    <ligand>
        <name>Ca(2+)</name>
        <dbReference type="ChEBI" id="CHEBI:29108"/>
        <label>3</label>
    </ligand>
</feature>
<feature type="binding site" evidence="4 7">
    <location>
        <position position="148"/>
    </location>
    <ligand>
        <name>Ca(2+)</name>
        <dbReference type="ChEBI" id="CHEBI:29108"/>
        <label>3</label>
    </ligand>
</feature>
<feature type="binding site" evidence="4 7">
    <location>
        <position position="150"/>
    </location>
    <ligand>
        <name>Ca(2+)</name>
        <dbReference type="ChEBI" id="CHEBI:29108"/>
        <label>3</label>
    </ligand>
</feature>
<feature type="binding site" evidence="4 7">
    <location>
        <position position="155"/>
    </location>
    <ligand>
        <name>Ca(2+)</name>
        <dbReference type="ChEBI" id="CHEBI:29108"/>
        <label>3</label>
    </ligand>
</feature>
<feature type="modified residue" description="Deamidated asparagine" evidence="3">
    <location>
        <position position="3"/>
    </location>
</feature>
<feature type="lipid moiety-binding region" description="N-myristoyl glycine" evidence="8">
    <location>
        <position position="2"/>
    </location>
</feature>
<feature type="mutagenesis site" description="Decreases affinity for calcium and promotes magnesium binding at EF-hand 2." evidence="7">
    <original>V</original>
    <variation>E</variation>
    <location>
        <position position="77"/>
    </location>
</feature>
<feature type="mutagenesis site" description="Constitutively activates GUCY2D." evidence="11">
    <original>Y</original>
    <variation>C</variation>
    <location>
        <position position="99"/>
    </location>
</feature>
<feature type="mutagenesis site" description="Nearly abolishes activation of GUCY2D." evidence="7">
    <location>
        <position position="172"/>
    </location>
</feature>
<feature type="mutagenesis site" description="Abolishes activation of GUCY2D." evidence="7">
    <original>S</original>
    <variation>SG</variation>
    <location>
        <position position="173"/>
    </location>
</feature>
<feature type="mutagenesis site" description="Nearly abolishes activation of GUCY2D." evidence="7">
    <location>
        <position position="173"/>
    </location>
</feature>
<feature type="mutagenesis site" description="Nearly abolishes activation of GUCY2D." evidence="7">
    <location>
        <position position="174"/>
    </location>
</feature>
<feature type="sequence conflict" description="In Ref. 1; AAB31698." evidence="12" ref="1">
    <original>D</original>
    <variation>I</variation>
    <location>
        <position position="108"/>
    </location>
</feature>
<feature type="helix" evidence="13">
    <location>
        <begin position="8"/>
        <end position="14"/>
    </location>
</feature>
<feature type="helix" evidence="13">
    <location>
        <begin position="17"/>
        <end position="28"/>
    </location>
</feature>
<feature type="strand" evidence="13">
    <location>
        <begin position="31"/>
        <end position="35"/>
    </location>
</feature>
<feature type="helix" evidence="13">
    <location>
        <begin position="36"/>
        <end position="43"/>
    </location>
</feature>
<feature type="helix" evidence="13">
    <location>
        <begin position="51"/>
        <end position="64"/>
    </location>
</feature>
<feature type="strand" evidence="13">
    <location>
        <begin position="69"/>
        <end position="72"/>
    </location>
</feature>
<feature type="helix" evidence="13">
    <location>
        <begin position="73"/>
        <end position="83"/>
    </location>
</feature>
<feature type="helix" evidence="13">
    <location>
        <begin position="88"/>
        <end position="99"/>
    </location>
</feature>
<feature type="strand" evidence="13">
    <location>
        <begin position="103"/>
        <end position="105"/>
    </location>
</feature>
<feature type="helix" evidence="13">
    <location>
        <begin position="109"/>
        <end position="119"/>
    </location>
</feature>
<feature type="strand" evidence="13">
    <location>
        <begin position="124"/>
        <end position="130"/>
    </location>
</feature>
<feature type="helix" evidence="13">
    <location>
        <begin position="133"/>
        <end position="143"/>
    </location>
</feature>
<feature type="helix" evidence="13">
    <location>
        <begin position="144"/>
        <end position="146"/>
    </location>
</feature>
<feature type="helix" evidence="13">
    <location>
        <begin position="154"/>
        <end position="161"/>
    </location>
</feature>
<feature type="helix" evidence="13">
    <location>
        <begin position="164"/>
        <end position="173"/>
    </location>
</feature>
<feature type="helix" evidence="13">
    <location>
        <begin position="179"/>
        <end position="184"/>
    </location>
</feature>
<organism>
    <name type="scientific">Bos taurus</name>
    <name type="common">Bovine</name>
    <dbReference type="NCBI Taxonomy" id="9913"/>
    <lineage>
        <taxon>Eukaryota</taxon>
        <taxon>Metazoa</taxon>
        <taxon>Chordata</taxon>
        <taxon>Craniata</taxon>
        <taxon>Vertebrata</taxon>
        <taxon>Euteleostomi</taxon>
        <taxon>Mammalia</taxon>
        <taxon>Eutheria</taxon>
        <taxon>Laurasiatheria</taxon>
        <taxon>Artiodactyla</taxon>
        <taxon>Ruminantia</taxon>
        <taxon>Pecora</taxon>
        <taxon>Bovidae</taxon>
        <taxon>Bovinae</taxon>
        <taxon>Bos</taxon>
    </lineage>
</organism>
<reference key="1">
    <citation type="journal article" date="1994" name="Neuron">
        <title>Molecular cloning and characterization of retinal photoreceptor guanylyl cyclase-activating protein.</title>
        <authorList>
            <person name="Palczewski K."/>
            <person name="Subbaraya I."/>
            <person name="Gorczyca W.A."/>
            <person name="Helekar B.S."/>
            <person name="Ruiz C.C."/>
            <person name="Ohguro H."/>
            <person name="Huang J."/>
            <person name="Zhao X."/>
            <person name="Crabb J.W."/>
            <person name="Johnson R.S."/>
            <person name="Walsh K.A."/>
            <person name="Gray-Keller M.P."/>
            <person name="Detwiler P.B."/>
            <person name="Baehr W."/>
        </authorList>
    </citation>
    <scope>NUCLEOTIDE SEQUENCE [GENOMIC DNA]</scope>
    <scope>PARTIAL PROTEIN SEQUENCE</scope>
    <scope>FUNCTION</scope>
    <scope>SUBCELLULAR LOCATION</scope>
    <scope>TISSUE SPECIFICITY</scope>
    <scope>IDENTIFICATION BY MASS SPECTROMETRY</scope>
    <scope>CALCIUM-BINDING</scope>
    <scope>MYRISTOYLATION AT GLY-2</scope>
    <source>
        <tissue>Retina</tissue>
    </source>
</reference>
<reference key="2">
    <citation type="journal article" date="1996" name="J. Biol. Chem.">
        <title>Functional characterization of a guanylyl cyclase-activating protein from vertebrate rods. Cloning, heterologous expression, and localization.</title>
        <authorList>
            <person name="Frins S."/>
            <person name="Boenigk W."/>
            <person name="Mueller F."/>
            <person name="Kellner R."/>
            <person name="Koch K.W."/>
        </authorList>
    </citation>
    <scope>NUCLEOTIDE SEQUENCE [MRNA]</scope>
    <scope>PARTIAL PROTEIN SEQUENCE</scope>
    <scope>FUNCTION</scope>
    <scope>TISSUE SPECIFICITY</scope>
</reference>
<reference key="3">
    <citation type="journal article" date="1998" name="Invest. Ophthalmol. Vis. Sci.">
        <title>The localization of guanylyl cyclase-activating proteins in the mammalian retina.</title>
        <authorList>
            <person name="Cuenca N."/>
            <person name="Lopez S."/>
            <person name="Howes K."/>
            <person name="Kolb H."/>
        </authorList>
    </citation>
    <scope>TISSUE SPECIFICITY</scope>
    <scope>SUBCELLULAR LOCATION</scope>
</reference>
<reference key="4">
    <citation type="journal article" date="2000" name="Biochemistry">
        <title>Rod outer segment membrane guanylate cyclase type 1-linked stimulatory and inhibitory calcium signaling systems in the pineal gland: biochemical, molecular, and immunohistochemical evidence.</title>
        <authorList>
            <person name="Venkataraman V."/>
            <person name="Nagele R."/>
            <person name="Duda T."/>
            <person name="Sharma R.K."/>
        </authorList>
    </citation>
    <scope>TISSUE SPECIFICITY</scope>
</reference>
<reference key="5">
    <citation type="journal article" date="1998" name="J. Biol. Chem.">
        <title>Constitutive activation of photoreceptor guanylate cyclase by Y99C mutant of GCAP-1. Possible role in causing human autosomal dominant cone degeneration.</title>
        <authorList>
            <person name="Dizhoor A.M."/>
            <person name="Boikov S.G."/>
            <person name="Olshevskaya E.V."/>
        </authorList>
    </citation>
    <scope>FUNCTION</scope>
    <scope>MUTAGENESIS OF TYR-99</scope>
</reference>
<reference key="6">
    <citation type="journal article" date="2016" name="J. Biol. Chem.">
        <title>Structure of guanylyl cyclase activator protein 1 (GCAP1) mutant V77E in a Ca2+-free/Mg2+-bound activator state.</title>
        <authorList>
            <person name="Lim S."/>
            <person name="Peshenko I.V."/>
            <person name="Olshevskaya E.V."/>
            <person name="Dizhoor A.M."/>
            <person name="Ames J.B."/>
        </authorList>
    </citation>
    <scope>STRUCTURE BY NMR OF 2-205</scope>
    <scope>CALCIUM-BINDING</scope>
    <scope>FUNCTION</scope>
    <scope>DOMAIN</scope>
    <scope>MUTAGENESIS OF VAL-77; ARG-172; SER-173 AND LEU-174</scope>
</reference>
<name>GUC1A_BOVIN</name>
<comment type="function">
    <text evidence="2 8 9">Stimulates retinal guanylyl cyclase when free calcium ions concentration is low and inhibits guanylyl cyclase when free calcium ions concentration is elevated (PubMed:26703466, PubMed:7520254, PubMed:8626484, PubMed:9651312). This Ca(2+)-sensitive regulation of retinal guanylyl cyclase is a key event in recovery of the dark state of rod photoreceptors following light exposure (PubMed:7520254, PubMed:8626484). May be involved in cone photoreceptor light response and recovery of response in bright light (By similarity).</text>
</comment>
<comment type="subunit">
    <text evidence="1">Homodimer.</text>
</comment>
<comment type="interaction">
    <interactant intactId="EBI-6943108">
        <id>P46065</id>
    </interactant>
    <interactant intactId="EBI-6943076">
        <id>P55203</id>
        <label>GUCY2D</label>
    </interactant>
    <organismsDiffer>false</organismsDiffer>
    <experiments>2</experiments>
</comment>
<comment type="interaction">
    <interactant intactId="EBI-6943108">
        <id>P46065</id>
    </interactant>
    <interactant intactId="EBI-6943159">
        <id>P81948</id>
        <label>TUBA4A</label>
    </interactant>
    <organismsDiffer>false</organismsDiffer>
    <experiments>2</experiments>
</comment>
<comment type="subcellular location">
    <subcellularLocation>
        <location>Membrane</location>
        <topology evidence="8">Lipid-anchor</topology>
    </subcellularLocation>
    <subcellularLocation>
        <location evidence="10">Photoreceptor inner segment</location>
    </subcellularLocation>
    <subcellularLocation>
        <location evidence="10">Cell projection</location>
        <location evidence="10">Cilium</location>
        <location evidence="10">Photoreceptor outer segment</location>
    </subcellularLocation>
    <text evidence="2">Subcellular location is not affected by light or dark conditions.</text>
</comment>
<comment type="tissue specificity">
    <text evidence="6 8 9 10">Detected in the retina (PubMed:7520254). Detected in rod and cone photoreceptor cells (at protein level) (PubMed:8626484, PubMed:9620085). Also present in certain pinealocytes (PubMed:10821676).</text>
</comment>
<comment type="domain">
    <text evidence="7">Binds three calcium ions (via EF-hands 2, 3 and 4) when calcium levels are high. Binds Mg(2+) when calcium levels are low.</text>
</comment>